<gene>
    <name evidence="1" type="primary">coaD</name>
    <name type="ordered locus">LAF_0606</name>
</gene>
<accession>B2GBB0</accession>
<organism>
    <name type="scientific">Limosilactobacillus fermentum (strain NBRC 3956 / LMG 18251)</name>
    <name type="common">Lactobacillus fermentum</name>
    <dbReference type="NCBI Taxonomy" id="334390"/>
    <lineage>
        <taxon>Bacteria</taxon>
        <taxon>Bacillati</taxon>
        <taxon>Bacillota</taxon>
        <taxon>Bacilli</taxon>
        <taxon>Lactobacillales</taxon>
        <taxon>Lactobacillaceae</taxon>
        <taxon>Limosilactobacillus</taxon>
    </lineage>
</organism>
<sequence>MKVAIFPGSFDPLTLGHLDLIKRGSALFDHLAVAVMTNTSKDAWFTVDERVAQVKEAVAGLDNVSVITATGLTVDLMNKIGADYLMRGVRNVDDFRYEKDIAAMNHYLDDQVETIIFLADPKYQYLSSSLLKEVAMSGGNIAALLPANINEALQARLEKRQMKRVKKENEEAR</sequence>
<keyword id="KW-0067">ATP-binding</keyword>
<keyword id="KW-0173">Coenzyme A biosynthesis</keyword>
<keyword id="KW-0963">Cytoplasm</keyword>
<keyword id="KW-0460">Magnesium</keyword>
<keyword id="KW-0547">Nucleotide-binding</keyword>
<keyword id="KW-0548">Nucleotidyltransferase</keyword>
<keyword id="KW-1185">Reference proteome</keyword>
<keyword id="KW-0808">Transferase</keyword>
<name>COAD_LIMF3</name>
<reference key="1">
    <citation type="journal article" date="2008" name="DNA Res.">
        <title>Comparative genome analysis of Lactobacillus reuteri and Lactobacillus fermentum reveal a genomic island for reuterin and cobalamin production.</title>
        <authorList>
            <person name="Morita H."/>
            <person name="Toh H."/>
            <person name="Fukuda S."/>
            <person name="Horikawa H."/>
            <person name="Oshima K."/>
            <person name="Suzuki T."/>
            <person name="Murakami M."/>
            <person name="Hisamatsu S."/>
            <person name="Kato Y."/>
            <person name="Takizawa T."/>
            <person name="Fukuoka H."/>
            <person name="Yoshimura T."/>
            <person name="Itoh K."/>
            <person name="O'Sullivan D.J."/>
            <person name="McKay L.L."/>
            <person name="Ohno H."/>
            <person name="Kikuchi J."/>
            <person name="Masaoka T."/>
            <person name="Hattori M."/>
        </authorList>
    </citation>
    <scope>NUCLEOTIDE SEQUENCE [LARGE SCALE GENOMIC DNA]</scope>
    <source>
        <strain>NBRC 3956 / LMG 18251</strain>
    </source>
</reference>
<dbReference type="EC" id="2.7.7.3" evidence="1"/>
<dbReference type="EMBL" id="AP008937">
    <property type="protein sequence ID" value="BAG26942.1"/>
    <property type="molecule type" value="Genomic_DNA"/>
</dbReference>
<dbReference type="RefSeq" id="WP_003686377.1">
    <property type="nucleotide sequence ID" value="NC_010610.1"/>
</dbReference>
<dbReference type="SMR" id="B2GBB0"/>
<dbReference type="KEGG" id="lfe:LAF_0606"/>
<dbReference type="eggNOG" id="COG0669">
    <property type="taxonomic scope" value="Bacteria"/>
</dbReference>
<dbReference type="HOGENOM" id="CLU_100149_1_1_9"/>
<dbReference type="UniPathway" id="UPA00241">
    <property type="reaction ID" value="UER00355"/>
</dbReference>
<dbReference type="Proteomes" id="UP000001697">
    <property type="component" value="Chromosome"/>
</dbReference>
<dbReference type="GO" id="GO:0005737">
    <property type="term" value="C:cytoplasm"/>
    <property type="evidence" value="ECO:0007669"/>
    <property type="project" value="UniProtKB-SubCell"/>
</dbReference>
<dbReference type="GO" id="GO:0005524">
    <property type="term" value="F:ATP binding"/>
    <property type="evidence" value="ECO:0007669"/>
    <property type="project" value="UniProtKB-KW"/>
</dbReference>
<dbReference type="GO" id="GO:0004595">
    <property type="term" value="F:pantetheine-phosphate adenylyltransferase activity"/>
    <property type="evidence" value="ECO:0007669"/>
    <property type="project" value="UniProtKB-UniRule"/>
</dbReference>
<dbReference type="GO" id="GO:0015937">
    <property type="term" value="P:coenzyme A biosynthetic process"/>
    <property type="evidence" value="ECO:0007669"/>
    <property type="project" value="UniProtKB-UniRule"/>
</dbReference>
<dbReference type="CDD" id="cd02163">
    <property type="entry name" value="PPAT"/>
    <property type="match status" value="1"/>
</dbReference>
<dbReference type="Gene3D" id="3.40.50.620">
    <property type="entry name" value="HUPs"/>
    <property type="match status" value="1"/>
</dbReference>
<dbReference type="HAMAP" id="MF_00151">
    <property type="entry name" value="PPAT_bact"/>
    <property type="match status" value="1"/>
</dbReference>
<dbReference type="InterPro" id="IPR004821">
    <property type="entry name" value="Cyt_trans-like"/>
</dbReference>
<dbReference type="InterPro" id="IPR001980">
    <property type="entry name" value="PPAT"/>
</dbReference>
<dbReference type="InterPro" id="IPR014729">
    <property type="entry name" value="Rossmann-like_a/b/a_fold"/>
</dbReference>
<dbReference type="NCBIfam" id="TIGR01510">
    <property type="entry name" value="coaD_prev_kdtB"/>
    <property type="match status" value="1"/>
</dbReference>
<dbReference type="NCBIfam" id="TIGR00125">
    <property type="entry name" value="cyt_tran_rel"/>
    <property type="match status" value="1"/>
</dbReference>
<dbReference type="PANTHER" id="PTHR21342">
    <property type="entry name" value="PHOSPHOPANTETHEINE ADENYLYLTRANSFERASE"/>
    <property type="match status" value="1"/>
</dbReference>
<dbReference type="PANTHER" id="PTHR21342:SF1">
    <property type="entry name" value="PHOSPHOPANTETHEINE ADENYLYLTRANSFERASE"/>
    <property type="match status" value="1"/>
</dbReference>
<dbReference type="Pfam" id="PF01467">
    <property type="entry name" value="CTP_transf_like"/>
    <property type="match status" value="1"/>
</dbReference>
<dbReference type="PRINTS" id="PR01020">
    <property type="entry name" value="LPSBIOSNTHSS"/>
</dbReference>
<dbReference type="SUPFAM" id="SSF52374">
    <property type="entry name" value="Nucleotidylyl transferase"/>
    <property type="match status" value="1"/>
</dbReference>
<feature type="chain" id="PRO_1000096807" description="Phosphopantetheine adenylyltransferase">
    <location>
        <begin position="1"/>
        <end position="173"/>
    </location>
</feature>
<feature type="binding site" evidence="1">
    <location>
        <begin position="9"/>
        <end position="10"/>
    </location>
    <ligand>
        <name>ATP</name>
        <dbReference type="ChEBI" id="CHEBI:30616"/>
    </ligand>
</feature>
<feature type="binding site" evidence="1">
    <location>
        <position position="9"/>
    </location>
    <ligand>
        <name>substrate</name>
    </ligand>
</feature>
<feature type="binding site" evidence="1">
    <location>
        <position position="17"/>
    </location>
    <ligand>
        <name>ATP</name>
        <dbReference type="ChEBI" id="CHEBI:30616"/>
    </ligand>
</feature>
<feature type="binding site" evidence="1">
    <location>
        <position position="41"/>
    </location>
    <ligand>
        <name>substrate</name>
    </ligand>
</feature>
<feature type="binding site" evidence="1">
    <location>
        <position position="73"/>
    </location>
    <ligand>
        <name>substrate</name>
    </ligand>
</feature>
<feature type="binding site" evidence="1">
    <location>
        <position position="87"/>
    </location>
    <ligand>
        <name>substrate</name>
    </ligand>
</feature>
<feature type="binding site" evidence="1">
    <location>
        <begin position="88"/>
        <end position="90"/>
    </location>
    <ligand>
        <name>ATP</name>
        <dbReference type="ChEBI" id="CHEBI:30616"/>
    </ligand>
</feature>
<feature type="binding site" evidence="1">
    <location>
        <position position="98"/>
    </location>
    <ligand>
        <name>ATP</name>
        <dbReference type="ChEBI" id="CHEBI:30616"/>
    </ligand>
</feature>
<feature type="binding site" evidence="1">
    <location>
        <begin position="123"/>
        <end position="129"/>
    </location>
    <ligand>
        <name>ATP</name>
        <dbReference type="ChEBI" id="CHEBI:30616"/>
    </ligand>
</feature>
<feature type="site" description="Transition state stabilizer" evidence="1">
    <location>
        <position position="17"/>
    </location>
</feature>
<evidence type="ECO:0000255" key="1">
    <source>
        <dbReference type="HAMAP-Rule" id="MF_00151"/>
    </source>
</evidence>
<protein>
    <recommendedName>
        <fullName evidence="1">Phosphopantetheine adenylyltransferase</fullName>
        <ecNumber evidence="1">2.7.7.3</ecNumber>
    </recommendedName>
    <alternativeName>
        <fullName evidence="1">Dephospho-CoA pyrophosphorylase</fullName>
    </alternativeName>
    <alternativeName>
        <fullName evidence="1">Pantetheine-phosphate adenylyltransferase</fullName>
        <shortName evidence="1">PPAT</shortName>
    </alternativeName>
</protein>
<proteinExistence type="inferred from homology"/>
<comment type="function">
    <text evidence="1">Reversibly transfers an adenylyl group from ATP to 4'-phosphopantetheine, yielding dephospho-CoA (dPCoA) and pyrophosphate.</text>
</comment>
<comment type="catalytic activity">
    <reaction evidence="1">
        <text>(R)-4'-phosphopantetheine + ATP + H(+) = 3'-dephospho-CoA + diphosphate</text>
        <dbReference type="Rhea" id="RHEA:19801"/>
        <dbReference type="ChEBI" id="CHEBI:15378"/>
        <dbReference type="ChEBI" id="CHEBI:30616"/>
        <dbReference type="ChEBI" id="CHEBI:33019"/>
        <dbReference type="ChEBI" id="CHEBI:57328"/>
        <dbReference type="ChEBI" id="CHEBI:61723"/>
        <dbReference type="EC" id="2.7.7.3"/>
    </reaction>
</comment>
<comment type="cofactor">
    <cofactor evidence="1">
        <name>Mg(2+)</name>
        <dbReference type="ChEBI" id="CHEBI:18420"/>
    </cofactor>
</comment>
<comment type="pathway">
    <text evidence="1">Cofactor biosynthesis; coenzyme A biosynthesis; CoA from (R)-pantothenate: step 4/5.</text>
</comment>
<comment type="subunit">
    <text evidence="1">Homohexamer.</text>
</comment>
<comment type="subcellular location">
    <subcellularLocation>
        <location evidence="1">Cytoplasm</location>
    </subcellularLocation>
</comment>
<comment type="similarity">
    <text evidence="1">Belongs to the bacterial CoaD family.</text>
</comment>